<keyword id="KW-0067">ATP-binding</keyword>
<keyword id="KW-0963">Cytoplasm</keyword>
<keyword id="KW-0315">Glutamine amidotransferase</keyword>
<keyword id="KW-0332">GMP biosynthesis</keyword>
<keyword id="KW-0436">Ligase</keyword>
<keyword id="KW-0460">Magnesium</keyword>
<keyword id="KW-0547">Nucleotide-binding</keyword>
<keyword id="KW-0658">Purine biosynthesis</keyword>
<feature type="chain" id="PRO_0000460615" description="GMP synthase [glutamine-hydrolyzing]">
    <location>
        <begin position="1"/>
        <end position="544"/>
    </location>
</feature>
<feature type="domain" description="Glutamine amidotransferase type-1" evidence="3">
    <location>
        <begin position="12"/>
        <end position="210"/>
    </location>
</feature>
<feature type="domain" description="GMPS ATP-PPase" evidence="4">
    <location>
        <begin position="211"/>
        <end position="419"/>
    </location>
</feature>
<feature type="active site" description="Nucleophile" evidence="3">
    <location>
        <position position="88"/>
    </location>
</feature>
<feature type="active site" evidence="3">
    <location>
        <position position="184"/>
    </location>
</feature>
<feature type="active site" evidence="3">
    <location>
        <position position="186"/>
    </location>
</feature>
<feature type="binding site" evidence="4">
    <location>
        <begin position="239"/>
        <end position="245"/>
    </location>
    <ligand>
        <name>ATP</name>
        <dbReference type="ChEBI" id="CHEBI:30616"/>
    </ligand>
</feature>
<feature type="binding site" evidence="1">
    <location>
        <position position="312"/>
    </location>
    <ligand>
        <name>XMP</name>
        <dbReference type="ChEBI" id="CHEBI:57464"/>
    </ligand>
</feature>
<feature type="binding site" evidence="1">
    <location>
        <position position="481"/>
    </location>
    <ligand>
        <name>XMP</name>
        <dbReference type="ChEBI" id="CHEBI:57464"/>
    </ligand>
</feature>
<feature type="binding site" evidence="1">
    <location>
        <position position="536"/>
    </location>
    <ligand>
        <name>XMP</name>
        <dbReference type="ChEBI" id="CHEBI:57464"/>
    </ligand>
</feature>
<feature type="binding site" evidence="1">
    <location>
        <position position="542"/>
    </location>
    <ligand>
        <name>XMP</name>
        <dbReference type="ChEBI" id="CHEBI:57464"/>
    </ligand>
</feature>
<gene>
    <name evidence="6" type="primary">GUA1</name>
    <name evidence="8" type="ORF">CNAG_01877</name>
</gene>
<accession>J9VUY6</accession>
<reference evidence="9" key="1">
    <citation type="journal article" date="2014" name="PLoS Genet.">
        <title>Analysis of the genome and transcriptome of Cryptococcus neoformans var. grubii reveals complex RNA expression and microevolution leading to virulence attenuation.</title>
        <authorList>
            <person name="Janbon G."/>
            <person name="Ormerod K.L."/>
            <person name="Paulet D."/>
            <person name="Byrnes E.J. III"/>
            <person name="Yadav V."/>
            <person name="Chatterjee G."/>
            <person name="Mullapudi N."/>
            <person name="Hon C.-C."/>
            <person name="Billmyre R.B."/>
            <person name="Brunel F."/>
            <person name="Bahn Y.-S."/>
            <person name="Chen W."/>
            <person name="Chen Y."/>
            <person name="Chow E.W.L."/>
            <person name="Coppee J.-Y."/>
            <person name="Floyd-Averette A."/>
            <person name="Gaillardin C."/>
            <person name="Gerik K.J."/>
            <person name="Goldberg J."/>
            <person name="Gonzalez-Hilarion S."/>
            <person name="Gujja S."/>
            <person name="Hamlin J.L."/>
            <person name="Hsueh Y.-P."/>
            <person name="Ianiri G."/>
            <person name="Jones S."/>
            <person name="Kodira C.D."/>
            <person name="Kozubowski L."/>
            <person name="Lam W."/>
            <person name="Marra M."/>
            <person name="Mesner L.D."/>
            <person name="Mieczkowski P.A."/>
            <person name="Moyrand F."/>
            <person name="Nielsen K."/>
            <person name="Proux C."/>
            <person name="Rossignol T."/>
            <person name="Schein J.E."/>
            <person name="Sun S."/>
            <person name="Wollschlaeger C."/>
            <person name="Wood I.A."/>
            <person name="Zeng Q."/>
            <person name="Neuveglise C."/>
            <person name="Newlon C.S."/>
            <person name="Perfect J.R."/>
            <person name="Lodge J.K."/>
            <person name="Idnurm A."/>
            <person name="Stajich J.E."/>
            <person name="Kronstad J.W."/>
            <person name="Sanyal K."/>
            <person name="Heitman J."/>
            <person name="Fraser J.A."/>
            <person name="Cuomo C.A."/>
            <person name="Dietrich F.S."/>
        </authorList>
    </citation>
    <scope>NUCLEOTIDE SEQUENCE [LARGE SCALE GENOMIC DNA]</scope>
    <source>
        <strain>H99 / ATCC 208821 / CBS 10515 / FGSC 9487</strain>
    </source>
</reference>
<reference evidence="7" key="2">
    <citation type="journal article" date="2017" name="J. Biol. Chem.">
        <title>GMP Synthase Is Required for Virulence Factor Production and Infection by Cryptococcus neoformans.</title>
        <authorList>
            <person name="Chitty J.L."/>
            <person name="Tatzenko T.L."/>
            <person name="Williams S.J."/>
            <person name="Koh Y.Q."/>
            <person name="Corfield E.C."/>
            <person name="Butler M.S."/>
            <person name="Robertson A.A."/>
            <person name="Cooper M.A."/>
            <person name="Kappler U."/>
            <person name="Kobe B."/>
            <person name="Fraser J.A."/>
        </authorList>
    </citation>
    <scope>FUNCTION</scope>
    <scope>CATALYTIC ACTIVITY</scope>
    <scope>COFACTOR</scope>
    <scope>ACTIVITY REGULATION</scope>
    <scope>BIOPHYSICOCHEMICAL PROPERTIES</scope>
    <scope>PATHWAY</scope>
    <scope>SUBUNIT</scope>
    <scope>DISRUPTION PHENOTYPE</scope>
</reference>
<organism evidence="9">
    <name type="scientific">Cryptococcus neoformans var. grubii serotype A (strain H99 / ATCC 208821 / CBS 10515 / FGSC 9487)</name>
    <name type="common">Filobasidiella neoformans var. grubii</name>
    <dbReference type="NCBI Taxonomy" id="235443"/>
    <lineage>
        <taxon>Eukaryota</taxon>
        <taxon>Fungi</taxon>
        <taxon>Dikarya</taxon>
        <taxon>Basidiomycota</taxon>
        <taxon>Agaricomycotina</taxon>
        <taxon>Tremellomycetes</taxon>
        <taxon>Tremellales</taxon>
        <taxon>Cryptococcaceae</taxon>
        <taxon>Cryptococcus</taxon>
        <taxon>Cryptococcus neoformans species complex</taxon>
    </lineage>
</organism>
<protein>
    <recommendedName>
        <fullName evidence="6">GMP synthase [glutamine-hydrolyzing]</fullName>
        <ecNumber evidence="5">6.3.5.2</ecNumber>
    </recommendedName>
    <alternativeName>
        <fullName evidence="7">GMP synthetase</fullName>
    </alternativeName>
    <alternativeName>
        <fullName evidence="7">Glutamine amidotransferase</fullName>
    </alternativeName>
</protein>
<evidence type="ECO:0000250" key="1">
    <source>
        <dbReference type="UniProtKB" id="P49915"/>
    </source>
</evidence>
<evidence type="ECO:0000250" key="2">
    <source>
        <dbReference type="UniProtKB" id="Q9P772"/>
    </source>
</evidence>
<evidence type="ECO:0000255" key="3">
    <source>
        <dbReference type="PROSITE-ProRule" id="PRU00605"/>
    </source>
</evidence>
<evidence type="ECO:0000255" key="4">
    <source>
        <dbReference type="PROSITE-ProRule" id="PRU00886"/>
    </source>
</evidence>
<evidence type="ECO:0000269" key="5">
    <source>
    </source>
</evidence>
<evidence type="ECO:0000303" key="6">
    <source>
    </source>
</evidence>
<evidence type="ECO:0000305" key="7"/>
<evidence type="ECO:0000312" key="8">
    <source>
        <dbReference type="EMBL" id="AFR98073.1"/>
    </source>
</evidence>
<evidence type="ECO:0000312" key="9">
    <source>
        <dbReference type="Proteomes" id="UP000010091"/>
    </source>
</evidence>
<sequence length="544" mass="59941">MATEEIHSLYDTILILDFGSQYSHLITRRCRELNVYCEMLPCTQKISELSWKPKGIILSGSPYSVYAPDAPHVDPDVFTLGVPILGICYGLQEIARVHGGTVDAHTHREYGYAKIEVVKTGKKDQDALFEGIEMEADGGLQVWMSHGDQLTSLPPNFVTIASTPTSPFTSVAHESKPIYGVQFHPEVSHSPRGKEVIAAFVKNVCGVRDGWSMESFIPKEIARIRQICGEKGQVIGAVSGGVDSTVAAKLMHEAIGDRFHAIMVDNGVLRKDEAKKVHKMLTVDLGVNLTVIDASELFLARLKGVEDPERKRKIIGNTFIEVFEAEAAKLEAAAEKELAEKGGEAKGKIEWLLQGTLYPDVIESISFKGPSATIKTHHNVGGLLEDMKLKLIEPLRELFKDEVRALGRLLNIPEHLVGRHPFPGPGLAIRILGEVTREQIAILQHADDIYIEEIRAAGLYDQISQAFVALLPVKAVGVAGDARTYDQVVAVRAVSTEDFMTADWFVFPPQVLKRISSRITNEVKGVNRVVYDITSKPPGTVEWL</sequence>
<name>GUAA_CRYNH</name>
<dbReference type="EC" id="6.3.5.2" evidence="5"/>
<dbReference type="EMBL" id="CP003830">
    <property type="protein sequence ID" value="AFR98073.1"/>
    <property type="molecule type" value="Genomic_DNA"/>
</dbReference>
<dbReference type="RefSeq" id="XP_012052820.1">
    <property type="nucleotide sequence ID" value="XM_012197430.1"/>
</dbReference>
<dbReference type="SMR" id="J9VUY6"/>
<dbReference type="GeneID" id="23885547"/>
<dbReference type="KEGG" id="cng:CNAG_01877"/>
<dbReference type="VEuPathDB" id="FungiDB:CNAG_01877"/>
<dbReference type="HOGENOM" id="CLU_014340_0_5_1"/>
<dbReference type="OrthoDB" id="2591at5206"/>
<dbReference type="UniPathway" id="UPA00189">
    <property type="reaction ID" value="UER00296"/>
</dbReference>
<dbReference type="PHI-base" id="PHI:6871"/>
<dbReference type="Proteomes" id="UP000010091">
    <property type="component" value="Chromosome 11"/>
</dbReference>
<dbReference type="GO" id="GO:0005829">
    <property type="term" value="C:cytosol"/>
    <property type="evidence" value="ECO:0007669"/>
    <property type="project" value="UniProtKB-SubCell"/>
</dbReference>
<dbReference type="GO" id="GO:0005524">
    <property type="term" value="F:ATP binding"/>
    <property type="evidence" value="ECO:0007669"/>
    <property type="project" value="UniProtKB-KW"/>
</dbReference>
<dbReference type="GO" id="GO:0003922">
    <property type="term" value="F:GMP synthase (glutamine-hydrolyzing) activity"/>
    <property type="evidence" value="ECO:0000314"/>
    <property type="project" value="UniProtKB"/>
</dbReference>
<dbReference type="GO" id="GO:0003921">
    <property type="term" value="F:GMP synthase activity"/>
    <property type="evidence" value="ECO:0007669"/>
    <property type="project" value="InterPro"/>
</dbReference>
<dbReference type="GO" id="GO:0006177">
    <property type="term" value="P:GMP biosynthetic process"/>
    <property type="evidence" value="ECO:0000314"/>
    <property type="project" value="UniProtKB"/>
</dbReference>
<dbReference type="CDD" id="cd01742">
    <property type="entry name" value="GATase1_GMP_Synthase"/>
    <property type="match status" value="1"/>
</dbReference>
<dbReference type="CDD" id="cd01997">
    <property type="entry name" value="GMP_synthase_C"/>
    <property type="match status" value="1"/>
</dbReference>
<dbReference type="FunFam" id="3.30.300.10:FF:000002">
    <property type="entry name" value="GMP synthase [glutamine-hydrolyzing]"/>
    <property type="match status" value="1"/>
</dbReference>
<dbReference type="FunFam" id="3.40.50.620:FF:000001">
    <property type="entry name" value="GMP synthase [glutamine-hydrolyzing]"/>
    <property type="match status" value="1"/>
</dbReference>
<dbReference type="FunFam" id="3.40.50.880:FF:000001">
    <property type="entry name" value="GMP synthase [glutamine-hydrolyzing]"/>
    <property type="match status" value="1"/>
</dbReference>
<dbReference type="Gene3D" id="3.30.300.10">
    <property type="match status" value="1"/>
</dbReference>
<dbReference type="Gene3D" id="3.40.50.880">
    <property type="match status" value="1"/>
</dbReference>
<dbReference type="Gene3D" id="3.40.50.620">
    <property type="entry name" value="HUPs"/>
    <property type="match status" value="1"/>
</dbReference>
<dbReference type="HAMAP" id="MF_00344">
    <property type="entry name" value="GMP_synthase"/>
    <property type="match status" value="1"/>
</dbReference>
<dbReference type="InterPro" id="IPR029062">
    <property type="entry name" value="Class_I_gatase-like"/>
</dbReference>
<dbReference type="InterPro" id="IPR017926">
    <property type="entry name" value="GATASE"/>
</dbReference>
<dbReference type="InterPro" id="IPR001674">
    <property type="entry name" value="GMP_synth_C"/>
</dbReference>
<dbReference type="InterPro" id="IPR004739">
    <property type="entry name" value="GMP_synth_GATase"/>
</dbReference>
<dbReference type="InterPro" id="IPR022955">
    <property type="entry name" value="GMP_synthase"/>
</dbReference>
<dbReference type="InterPro" id="IPR025777">
    <property type="entry name" value="GMPS_ATP_PPase_dom"/>
</dbReference>
<dbReference type="InterPro" id="IPR022310">
    <property type="entry name" value="NAD/GMP_synthase"/>
</dbReference>
<dbReference type="InterPro" id="IPR014729">
    <property type="entry name" value="Rossmann-like_a/b/a_fold"/>
</dbReference>
<dbReference type="NCBIfam" id="TIGR00884">
    <property type="entry name" value="guaA_Cterm"/>
    <property type="match status" value="1"/>
</dbReference>
<dbReference type="NCBIfam" id="TIGR00888">
    <property type="entry name" value="guaA_Nterm"/>
    <property type="match status" value="1"/>
</dbReference>
<dbReference type="NCBIfam" id="NF000848">
    <property type="entry name" value="PRK00074.1"/>
    <property type="match status" value="1"/>
</dbReference>
<dbReference type="PANTHER" id="PTHR11922:SF2">
    <property type="entry name" value="GMP SYNTHASE [GLUTAMINE-HYDROLYZING]"/>
    <property type="match status" value="1"/>
</dbReference>
<dbReference type="PANTHER" id="PTHR11922">
    <property type="entry name" value="GMP SYNTHASE-RELATED"/>
    <property type="match status" value="1"/>
</dbReference>
<dbReference type="Pfam" id="PF00117">
    <property type="entry name" value="GATase"/>
    <property type="match status" value="1"/>
</dbReference>
<dbReference type="Pfam" id="PF00958">
    <property type="entry name" value="GMP_synt_C"/>
    <property type="match status" value="1"/>
</dbReference>
<dbReference type="Pfam" id="PF02540">
    <property type="entry name" value="NAD_synthase"/>
    <property type="match status" value="1"/>
</dbReference>
<dbReference type="PRINTS" id="PR00096">
    <property type="entry name" value="GATASE"/>
</dbReference>
<dbReference type="SUPFAM" id="SSF52402">
    <property type="entry name" value="Adenine nucleotide alpha hydrolases-like"/>
    <property type="match status" value="1"/>
</dbReference>
<dbReference type="SUPFAM" id="SSF52317">
    <property type="entry name" value="Class I glutamine amidotransferase-like"/>
    <property type="match status" value="1"/>
</dbReference>
<dbReference type="SUPFAM" id="SSF54810">
    <property type="entry name" value="GMP synthetase C-terminal dimerisation domain"/>
    <property type="match status" value="1"/>
</dbReference>
<dbReference type="PROSITE" id="PS51273">
    <property type="entry name" value="GATASE_TYPE_1"/>
    <property type="match status" value="1"/>
</dbReference>
<dbReference type="PROSITE" id="PS51553">
    <property type="entry name" value="GMPS_ATP_PPASE"/>
    <property type="match status" value="1"/>
</dbReference>
<proteinExistence type="evidence at protein level"/>
<comment type="function">
    <text evidence="5">Catalyzes the conversion of xanthine monophosphate (XMP) to GMP in the presence of glutamine and ATP through an adenyl-XMP intermediate.</text>
</comment>
<comment type="catalytic activity">
    <reaction evidence="5">
        <text>XMP + L-glutamine + ATP + H2O = GMP + L-glutamate + AMP + diphosphate + 2 H(+)</text>
        <dbReference type="Rhea" id="RHEA:11680"/>
        <dbReference type="ChEBI" id="CHEBI:15377"/>
        <dbReference type="ChEBI" id="CHEBI:15378"/>
        <dbReference type="ChEBI" id="CHEBI:29985"/>
        <dbReference type="ChEBI" id="CHEBI:30616"/>
        <dbReference type="ChEBI" id="CHEBI:33019"/>
        <dbReference type="ChEBI" id="CHEBI:57464"/>
        <dbReference type="ChEBI" id="CHEBI:58115"/>
        <dbReference type="ChEBI" id="CHEBI:58359"/>
        <dbReference type="ChEBI" id="CHEBI:456215"/>
        <dbReference type="EC" id="6.3.5.2"/>
    </reaction>
</comment>
<comment type="cofactor">
    <cofactor evidence="5">
        <name>Mg(2+)</name>
        <dbReference type="ChEBI" id="CHEBI:18420"/>
    </cofactor>
</comment>
<comment type="activity regulation">
    <text evidence="5">The enzyme is inhibited by ECC1385; although this compound fails to inhibit growth of the organism.</text>
</comment>
<comment type="biophysicochemical properties">
    <kinetics>
        <KM evidence="5">65.9 uM for XMP (at pH 7.5 and at 40 degrees Celsius)</KM>
        <KM evidence="5">77.5 uM for ATP (at pH 7.5 and at 40 degrees Celsius)</KM>
        <KM evidence="5">1130 uM for glutamine (at pH 7.5 and at 40 degrees Celsius)</KM>
        <text evidence="5">kcat is 0.41 sec(-1) for XMP (at pH 7.5 and at 40 degrees Celsius).</text>
    </kinetics>
</comment>
<comment type="pathway">
    <text evidence="5">Purine metabolism; GMP biosynthesis; GMP from XMP (L-Gln route): step 1/1.</text>
</comment>
<comment type="subunit">
    <text evidence="5">Homodimer (PubMed:28062578). Also forms a small population of homotetramers (PubMed:28062578).</text>
</comment>
<comment type="subcellular location">
    <subcellularLocation>
        <location evidence="2">Cytoplasm</location>
        <location evidence="2">Cytosol</location>
    </subcellularLocation>
</comment>
<comment type="disruption phenotype">
    <text evidence="5">Growth in minimal medium is dependent on the supplementation of guanine, addition of guanine however does not fully restore growth and the production of virulence factors is affected; in rich medium in contrast, growth is not restored by addition of guanine (PubMed:28062578). Avirulent in a murine inhalation model of crypotococcosis (PubMed:28062578). Avirulent in C.elegans when grown together on a lawn of minimal nematode growth medium but not when grown on brain heart infusion or minimal nematode growth medium supplemented with guanine (PubMed:28062578).</text>
</comment>